<gene>
    <name evidence="1" type="primary">rpmE2</name>
    <name type="ordered locus">PSPTO_4183</name>
</gene>
<feature type="chain" id="PRO_0000173249" description="Large ribosomal subunit protein bL31B">
    <location>
        <begin position="1"/>
        <end position="93"/>
    </location>
</feature>
<proteinExistence type="inferred from homology"/>
<reference key="1">
    <citation type="journal article" date="2003" name="Proc. Natl. Acad. Sci. U.S.A.">
        <title>The complete genome sequence of the Arabidopsis and tomato pathogen Pseudomonas syringae pv. tomato DC3000.</title>
        <authorList>
            <person name="Buell C.R."/>
            <person name="Joardar V."/>
            <person name="Lindeberg M."/>
            <person name="Selengut J."/>
            <person name="Paulsen I.T."/>
            <person name="Gwinn M.L."/>
            <person name="Dodson R.J."/>
            <person name="DeBoy R.T."/>
            <person name="Durkin A.S."/>
            <person name="Kolonay J.F."/>
            <person name="Madupu R."/>
            <person name="Daugherty S.C."/>
            <person name="Brinkac L.M."/>
            <person name="Beanan M.J."/>
            <person name="Haft D.H."/>
            <person name="Nelson W.C."/>
            <person name="Davidsen T.M."/>
            <person name="Zafar N."/>
            <person name="Zhou L."/>
            <person name="Liu J."/>
            <person name="Yuan Q."/>
            <person name="Khouri H.M."/>
            <person name="Fedorova N.B."/>
            <person name="Tran B."/>
            <person name="Russell D."/>
            <person name="Berry K.J."/>
            <person name="Utterback T.R."/>
            <person name="Van Aken S.E."/>
            <person name="Feldblyum T.V."/>
            <person name="D'Ascenzo M."/>
            <person name="Deng W.-L."/>
            <person name="Ramos A.R."/>
            <person name="Alfano J.R."/>
            <person name="Cartinhour S."/>
            <person name="Chatterjee A.K."/>
            <person name="Delaney T.P."/>
            <person name="Lazarowitz S.G."/>
            <person name="Martin G.B."/>
            <person name="Schneider D.J."/>
            <person name="Tang X."/>
            <person name="Bender C.L."/>
            <person name="White O."/>
            <person name="Fraser C.M."/>
            <person name="Collmer A."/>
        </authorList>
    </citation>
    <scope>NUCLEOTIDE SEQUENCE [LARGE SCALE GENOMIC DNA]</scope>
    <source>
        <strain>ATCC BAA-871 / DC3000</strain>
    </source>
</reference>
<organism>
    <name type="scientific">Pseudomonas syringae pv. tomato (strain ATCC BAA-871 / DC3000)</name>
    <dbReference type="NCBI Taxonomy" id="223283"/>
    <lineage>
        <taxon>Bacteria</taxon>
        <taxon>Pseudomonadati</taxon>
        <taxon>Pseudomonadota</taxon>
        <taxon>Gammaproteobacteria</taxon>
        <taxon>Pseudomonadales</taxon>
        <taxon>Pseudomonadaceae</taxon>
        <taxon>Pseudomonas</taxon>
    </lineage>
</organism>
<name>RL31B_PSESM</name>
<sequence>MKPDIHPAYRTVLFHDTAADAYFLIGSTVDTDRTQQHTDGTTYPYVALDVSSASHPMYTGQQRKTTTEGRIAGFNKRFASFGSGSNKETAATQ</sequence>
<dbReference type="EMBL" id="AE016853">
    <property type="protein sequence ID" value="AAO57639.1"/>
    <property type="molecule type" value="Genomic_DNA"/>
</dbReference>
<dbReference type="RefSeq" id="NP_793944.1">
    <property type="nucleotide sequence ID" value="NC_004578.1"/>
</dbReference>
<dbReference type="RefSeq" id="WP_005764807.1">
    <property type="nucleotide sequence ID" value="NC_004578.1"/>
</dbReference>
<dbReference type="SMR" id="Q87XJ5"/>
<dbReference type="STRING" id="223283.PSPTO_4183"/>
<dbReference type="KEGG" id="pst:PSPTO_4183"/>
<dbReference type="PATRIC" id="fig|223283.9.peg.4293"/>
<dbReference type="eggNOG" id="COG0254">
    <property type="taxonomic scope" value="Bacteria"/>
</dbReference>
<dbReference type="HOGENOM" id="CLU_114306_2_1_6"/>
<dbReference type="OrthoDB" id="9803251at2"/>
<dbReference type="PhylomeDB" id="Q87XJ5"/>
<dbReference type="Proteomes" id="UP000002515">
    <property type="component" value="Chromosome"/>
</dbReference>
<dbReference type="GO" id="GO:1990904">
    <property type="term" value="C:ribonucleoprotein complex"/>
    <property type="evidence" value="ECO:0007669"/>
    <property type="project" value="UniProtKB-KW"/>
</dbReference>
<dbReference type="GO" id="GO:0005840">
    <property type="term" value="C:ribosome"/>
    <property type="evidence" value="ECO:0007669"/>
    <property type="project" value="UniProtKB-KW"/>
</dbReference>
<dbReference type="GO" id="GO:0003735">
    <property type="term" value="F:structural constituent of ribosome"/>
    <property type="evidence" value="ECO:0007669"/>
    <property type="project" value="InterPro"/>
</dbReference>
<dbReference type="GO" id="GO:0006412">
    <property type="term" value="P:translation"/>
    <property type="evidence" value="ECO:0007669"/>
    <property type="project" value="UniProtKB-UniRule"/>
</dbReference>
<dbReference type="Gene3D" id="4.10.830.30">
    <property type="entry name" value="Ribosomal protein L31"/>
    <property type="match status" value="1"/>
</dbReference>
<dbReference type="HAMAP" id="MF_00502">
    <property type="entry name" value="Ribosomal_bL31_2"/>
    <property type="match status" value="1"/>
</dbReference>
<dbReference type="InterPro" id="IPR034704">
    <property type="entry name" value="Ribosomal_bL28/bL31-like_sf"/>
</dbReference>
<dbReference type="InterPro" id="IPR002150">
    <property type="entry name" value="Ribosomal_bL31"/>
</dbReference>
<dbReference type="InterPro" id="IPR027493">
    <property type="entry name" value="Ribosomal_bL31_B"/>
</dbReference>
<dbReference type="InterPro" id="IPR042105">
    <property type="entry name" value="Ribosomal_bL31_sf"/>
</dbReference>
<dbReference type="NCBIfam" id="TIGR00105">
    <property type="entry name" value="L31"/>
    <property type="match status" value="1"/>
</dbReference>
<dbReference type="NCBIfam" id="NF002462">
    <property type="entry name" value="PRK01678.1"/>
    <property type="match status" value="1"/>
</dbReference>
<dbReference type="PANTHER" id="PTHR33280">
    <property type="entry name" value="50S RIBOSOMAL PROTEIN L31, CHLOROPLASTIC"/>
    <property type="match status" value="1"/>
</dbReference>
<dbReference type="PANTHER" id="PTHR33280:SF1">
    <property type="entry name" value="LARGE RIBOSOMAL SUBUNIT PROTEIN BL31C"/>
    <property type="match status" value="1"/>
</dbReference>
<dbReference type="Pfam" id="PF01197">
    <property type="entry name" value="Ribosomal_L31"/>
    <property type="match status" value="1"/>
</dbReference>
<dbReference type="PRINTS" id="PR01249">
    <property type="entry name" value="RIBOSOMALL31"/>
</dbReference>
<dbReference type="SUPFAM" id="SSF143800">
    <property type="entry name" value="L28p-like"/>
    <property type="match status" value="1"/>
</dbReference>
<protein>
    <recommendedName>
        <fullName evidence="1">Large ribosomal subunit protein bL31B</fullName>
    </recommendedName>
    <alternativeName>
        <fullName evidence="2">50S ribosomal protein L31 type B</fullName>
    </alternativeName>
</protein>
<accession>Q87XJ5</accession>
<evidence type="ECO:0000255" key="1">
    <source>
        <dbReference type="HAMAP-Rule" id="MF_00502"/>
    </source>
</evidence>
<evidence type="ECO:0000305" key="2"/>
<keyword id="KW-1185">Reference proteome</keyword>
<keyword id="KW-0687">Ribonucleoprotein</keyword>
<keyword id="KW-0689">Ribosomal protein</keyword>
<comment type="subunit">
    <text evidence="1">Part of the 50S ribosomal subunit.</text>
</comment>
<comment type="similarity">
    <text evidence="1">Belongs to the bacterial ribosomal protein bL31 family. Type B subfamily.</text>
</comment>